<proteinExistence type="evidence at transcript level"/>
<feature type="signal peptide" evidence="1">
    <location>
        <begin position="1"/>
        <end position="19"/>
    </location>
</feature>
<feature type="chain" id="PRO_0000455699" description="Cuticle collagen 49" evidence="1">
    <location>
        <begin position="20"/>
        <end position="283"/>
    </location>
</feature>
<feature type="domain" description="Collagen-like" evidence="1">
    <location>
        <begin position="213"/>
        <end position="271"/>
    </location>
</feature>
<feature type="region of interest" description="Disordered" evidence="2">
    <location>
        <begin position="90"/>
        <end position="283"/>
    </location>
</feature>
<feature type="compositionally biased region" description="Basic and acidic residues" evidence="2">
    <location>
        <begin position="127"/>
        <end position="139"/>
    </location>
</feature>
<feature type="compositionally biased region" description="Pro residues" evidence="2">
    <location>
        <begin position="143"/>
        <end position="155"/>
    </location>
</feature>
<feature type="compositionally biased region" description="Low complexity" evidence="2">
    <location>
        <begin position="185"/>
        <end position="204"/>
    </location>
</feature>
<feature type="compositionally biased region" description="Basic and acidic residues" evidence="2">
    <location>
        <begin position="244"/>
        <end position="257"/>
    </location>
</feature>
<dbReference type="EMBL" id="BX284601">
    <property type="protein sequence ID" value="CCD67358.1"/>
    <property type="molecule type" value="Genomic_DNA"/>
</dbReference>
<dbReference type="PIR" id="T32921">
    <property type="entry name" value="T32921"/>
</dbReference>
<dbReference type="RefSeq" id="NP_491106.1">
    <property type="nucleotide sequence ID" value="NM_058705.5"/>
</dbReference>
<dbReference type="STRING" id="6239.K09H9.3.1"/>
<dbReference type="PaxDb" id="6239-K09H9.3"/>
<dbReference type="PeptideAtlas" id="O44989"/>
<dbReference type="EnsemblMetazoa" id="K09H9.3.1">
    <property type="protein sequence ID" value="K09H9.3.1"/>
    <property type="gene ID" value="WBGene00000626"/>
</dbReference>
<dbReference type="GeneID" id="187239"/>
<dbReference type="KEGG" id="cel:CELE_K09H9.3"/>
<dbReference type="UCSC" id="K09H9.3">
    <property type="organism name" value="c. elegans"/>
</dbReference>
<dbReference type="AGR" id="WB:WBGene00000626"/>
<dbReference type="CTD" id="187239"/>
<dbReference type="WormBase" id="K09H9.3">
    <property type="protein sequence ID" value="CE18038"/>
    <property type="gene ID" value="WBGene00000626"/>
    <property type="gene designation" value="col-49"/>
</dbReference>
<dbReference type="eggNOG" id="KOG3544">
    <property type="taxonomic scope" value="Eukaryota"/>
</dbReference>
<dbReference type="GeneTree" id="ENSGT00970000196363"/>
<dbReference type="HOGENOM" id="CLU_001074_4_3_1"/>
<dbReference type="InParanoid" id="O44989"/>
<dbReference type="OMA" id="CNCAEPT"/>
<dbReference type="OrthoDB" id="5877731at2759"/>
<dbReference type="PhylomeDB" id="O44989"/>
<dbReference type="PRO" id="PR:O44989"/>
<dbReference type="Proteomes" id="UP000001940">
    <property type="component" value="Chromosome I"/>
</dbReference>
<dbReference type="Bgee" id="WBGene00000626">
    <property type="expression patterns" value="Expressed in material anatomical entity and 2 other cell types or tissues"/>
</dbReference>
<dbReference type="GO" id="GO:0042302">
    <property type="term" value="F:structural constituent of cuticle"/>
    <property type="evidence" value="ECO:0007669"/>
    <property type="project" value="InterPro"/>
</dbReference>
<dbReference type="GO" id="GO:0040002">
    <property type="term" value="P:collagen and cuticulin-based cuticle development"/>
    <property type="evidence" value="ECO:0000315"/>
    <property type="project" value="UniProtKB"/>
</dbReference>
<dbReference type="InterPro" id="IPR002486">
    <property type="entry name" value="Col_cuticle_N"/>
</dbReference>
<dbReference type="InterPro" id="IPR008160">
    <property type="entry name" value="Collagen"/>
</dbReference>
<dbReference type="PANTHER" id="PTHR24637">
    <property type="entry name" value="COLLAGEN"/>
    <property type="match status" value="1"/>
</dbReference>
<dbReference type="PANTHER" id="PTHR24637:SF231">
    <property type="entry name" value="CUTICLE COLLAGEN 49"/>
    <property type="match status" value="1"/>
</dbReference>
<dbReference type="Pfam" id="PF01484">
    <property type="entry name" value="Col_cuticle_N"/>
    <property type="match status" value="1"/>
</dbReference>
<dbReference type="Pfam" id="PF01391">
    <property type="entry name" value="Collagen"/>
    <property type="match status" value="1"/>
</dbReference>
<dbReference type="SMART" id="SM01088">
    <property type="entry name" value="Col_cuticle_N"/>
    <property type="match status" value="1"/>
</dbReference>
<reference evidence="8" key="1">
    <citation type="journal article" date="1998" name="Science">
        <title>Genome sequence of the nematode C. elegans: a platform for investigating biology.</title>
        <authorList>
            <consortium name="The C. elegans sequencing consortium"/>
        </authorList>
    </citation>
    <scope>NUCLEOTIDE SEQUENCE [LARGE SCALE GENOMIC DNA]</scope>
    <source>
        <strain evidence="8">Bristol N2</strain>
    </source>
</reference>
<reference evidence="6" key="2">
    <citation type="journal article" date="2014" name="G3 (Bethesda)">
        <title>Use of an activated beta-catenin to identify Wnt pathway target genes in caenorhabditis elegans, including a subset of collagen genes expressed in late larval development.</title>
        <authorList>
            <person name="Jackson B.M."/>
            <person name="Abete-Luzi P."/>
            <person name="Krause M.W."/>
            <person name="Eisenmann D.M."/>
        </authorList>
    </citation>
    <scope>FUNCTION</scope>
    <scope>SUBCELLULAR LOCATION</scope>
    <scope>DEVELOPMENTAL STAGE</scope>
    <scope>DISRUPTION PHENOTYPE</scope>
</reference>
<reference evidence="6" key="3">
    <citation type="journal article" date="2018" name="Genesis">
        <title>Regulation of C. elegans L4 cuticle collagen genes by the heterochronic protein LIN-29.</title>
        <authorList>
            <person name="Abete-Luzi P."/>
            <person name="Eisenmann D.M."/>
        </authorList>
    </citation>
    <scope>FUNCTION</scope>
    <scope>DEVELOPMENTAL STAGE</scope>
</reference>
<gene>
    <name evidence="9" type="primary">col-49</name>
    <name evidence="9" type="ORF">K09H9.3</name>
</gene>
<protein>
    <recommendedName>
        <fullName evidence="5">Cuticle collagen 49</fullName>
    </recommendedName>
</protein>
<sequence>MWKFVIGSVSTAAFFVSVCTIYFSVSMLDELDSFRLSIRDELEDWKEVSDDTWQRLNDMTSRNVPKKTNILKEFVRGKRNVGNDQCNCAEPTKNCPAGPPGEKGSLGNPGQPGPDGVDGDNGVDGDVVIHDMPNPKECIKCPAGPPGPPGPPGPLGPRGDKGPSGPRGALGDQGETGPVGEIGDQGPPGSAGRAGPRGQAGQPGTIAIVGLAGRPGPQGPLGEPGAQGEPGVDGKDGALGAPGRKAENGRPGKRGKDGVAGVPGTRGKEGEDAGYCTCPPRTA</sequence>
<evidence type="ECO:0000255" key="1"/>
<evidence type="ECO:0000256" key="2">
    <source>
        <dbReference type="SAM" id="MobiDB-lite"/>
    </source>
</evidence>
<evidence type="ECO:0000269" key="3">
    <source>
    </source>
</evidence>
<evidence type="ECO:0000269" key="4">
    <source>
    </source>
</evidence>
<evidence type="ECO:0000303" key="5">
    <source>
    </source>
</evidence>
<evidence type="ECO:0000305" key="6"/>
<evidence type="ECO:0000305" key="7">
    <source>
    </source>
</evidence>
<evidence type="ECO:0000312" key="8">
    <source>
        <dbReference type="Proteomes" id="UP000001940"/>
    </source>
</evidence>
<evidence type="ECO:0000312" key="9">
    <source>
        <dbReference type="WormBase" id="K09H9.3"/>
    </source>
</evidence>
<name>COL49_CAEEL</name>
<keyword id="KW-1015">Disulfide bond</keyword>
<keyword id="KW-1185">Reference proteome</keyword>
<keyword id="KW-0677">Repeat</keyword>
<keyword id="KW-0732">Signal</keyword>
<accession>O44989</accession>
<organism evidence="8">
    <name type="scientific">Caenorhabditis elegans</name>
    <dbReference type="NCBI Taxonomy" id="6239"/>
    <lineage>
        <taxon>Eukaryota</taxon>
        <taxon>Metazoa</taxon>
        <taxon>Ecdysozoa</taxon>
        <taxon>Nematoda</taxon>
        <taxon>Chromadorea</taxon>
        <taxon>Rhabditida</taxon>
        <taxon>Rhabditina</taxon>
        <taxon>Rhabditomorpha</taxon>
        <taxon>Rhabditoidea</taxon>
        <taxon>Rhabditidae</taxon>
        <taxon>Peloderinae</taxon>
        <taxon>Caenorhabditis</taxon>
    </lineage>
</organism>
<comment type="function">
    <text evidence="3 7">Probable cuticular collagen-like protein (Probable). Nematode cuticles are composed largely of collagen-like proteins (Probable). The cuticle functions both as an exoskeleton and as a barrier to protect the worm from its environment (Probable). Acts downstream of the Wnt signaling pathway, perhaps in the formation of the adult cuticle (PubMed:24569038).</text>
</comment>
<comment type="subunit">
    <text evidence="7">Collagen polypeptide chains are complexed within the cuticle by disulfide bonds and other types of covalent cross-links.</text>
</comment>
<comment type="developmental stage">
    <text evidence="3 4">Expressed in the hypodermal cells of the tail and head, the seam cells, and in the hyp7 syncytial hypodermis in the larval L4 stage, and in the young adult (PubMed:24569038, PubMed:29604168). Not expressed in the cells of the developing vulva (PubMed:24569038).</text>
</comment>
<comment type="disruption phenotype">
    <text evidence="3">RNAi-mediated knockdown causes dumpy body shape (PubMed:24569038). Defects in cuticle integrity (PubMed:24569038).</text>
</comment>
<comment type="similarity">
    <text evidence="6">Belongs to the cuticular collagen family.</text>
</comment>